<feature type="chain" id="PRO_0000282714" description="Probable ATP-dependent RNA helicase DDX59">
    <location>
        <begin position="1"/>
        <end position="619"/>
    </location>
</feature>
<feature type="domain" description="Helicase ATP-binding" evidence="2">
    <location>
        <begin position="234"/>
        <end position="405"/>
    </location>
</feature>
<feature type="domain" description="Helicase C-terminal" evidence="3">
    <location>
        <begin position="416"/>
        <end position="579"/>
    </location>
</feature>
<feature type="zinc finger region" description="HIT-type">
    <location>
        <begin position="104"/>
        <end position="133"/>
    </location>
</feature>
<feature type="region of interest" description="Disordered" evidence="4">
    <location>
        <begin position="1"/>
        <end position="101"/>
    </location>
</feature>
<feature type="region of interest" description="Disordered" evidence="4">
    <location>
        <begin position="583"/>
        <end position="603"/>
    </location>
</feature>
<feature type="short sequence motif" description="Q motif">
    <location>
        <begin position="203"/>
        <end position="231"/>
    </location>
</feature>
<feature type="short sequence motif" description="DEAD box">
    <location>
        <begin position="353"/>
        <end position="356"/>
    </location>
</feature>
<feature type="compositionally biased region" description="Basic and acidic residues" evidence="4">
    <location>
        <begin position="12"/>
        <end position="27"/>
    </location>
</feature>
<feature type="compositionally biased region" description="Polar residues" evidence="4">
    <location>
        <begin position="59"/>
        <end position="76"/>
    </location>
</feature>
<feature type="compositionally biased region" description="Basic and acidic residues" evidence="4">
    <location>
        <begin position="79"/>
        <end position="91"/>
    </location>
</feature>
<feature type="compositionally biased region" description="Basic and acidic residues" evidence="4">
    <location>
        <begin position="583"/>
        <end position="594"/>
    </location>
</feature>
<feature type="binding site" evidence="2">
    <location>
        <begin position="247"/>
        <end position="254"/>
    </location>
    <ligand>
        <name>ATP</name>
        <dbReference type="ChEBI" id="CHEBI:30616"/>
    </ligand>
</feature>
<feature type="modified residue" description="Phosphoserine" evidence="1">
    <location>
        <position position="64"/>
    </location>
</feature>
<feature type="modified residue" description="Phosphoserine" evidence="8">
    <location>
        <position position="160"/>
    </location>
</feature>
<feature type="cross-link" description="Glycyl lysine isopeptide (Lys-Gly) (interchain with G-Cter in SUMO2)" evidence="1">
    <location>
        <position position="26"/>
    </location>
</feature>
<feature type="splice variant" id="VSP_026429" description="In isoform 2." evidence="6">
    <original>DKTPSALILTPTRELAIQIERQAK</original>
    <variation>VIYQSDMSSSLKQTRDLPSFIVCN</variation>
    <location>
        <begin position="269"/>
        <end position="292"/>
    </location>
</feature>
<feature type="splice variant" id="VSP_026430" description="In isoform 2." evidence="6">
    <location>
        <begin position="293"/>
        <end position="619"/>
    </location>
</feature>
<feature type="sequence conflict" description="In Ref. 1; BAB28694." evidence="7" ref="1">
    <original>C</original>
    <variation>S</variation>
    <location>
        <position position="208"/>
    </location>
</feature>
<sequence>MFVPRSLKIKRSSNDDLKSGEAKKSKPEAGGLQVEGDRDTPVHTSVTEEAVTADKPGHASSTNSPSCQLAEVSSTGPDEGVKDSHPSEEPVKSFSKTQRWPEPGEPVCVVCGRYGEYICDKTDEDVCSLECKAKHLLQVKEGEGSLRPSSPQRVAAEPESPLDAFYVYKEHPFIVTLKEDQIETLKQQLGISVQGQDVARPIIDFEHCGFPETLNQNLKKSGYEVPTPIQMQMIPVGLLGRDILASADTGSGKTAAFLLPVIIRAFSEDKTPSALILTPTRELAIQIERQAKELMSGLPRMKTVLLVGGLPLPPQLYRLRQHVKVIIATPGRLLDIIKQSSVSLSGIKIVVVDEADTMLKMGFQQQVLDVLEHTPGDCQTILVSATIPDSIEQLTDQLLHNPVRIITGDKNLPCASVRQIILWVEDPAKKKKLFEILNDQKLFKPPVLVFVDCKLGADLLSEAVQKITGLNSTSIHSEKSQVERRDILKGLLEGDYEVVVSTGVLGRGLDLVNVKLVVNFDMPSSMDEYVHQVGRVGRLGQNGTAITFINNNSKRLFWDVAKRVKPTGSILPPQLLNSPYLHEQKRKEQQKDRQTQNSLVTGANLMDIIRKHEKSSSQK</sequence>
<gene>
    <name type="primary">Ddx59</name>
    <name evidence="1" type="synonym">Znhit5</name>
</gene>
<accession>Q9DBN9</accession>
<accession>Q8C667</accession>
<accession>Q9CSD1</accession>
<dbReference type="EC" id="3.6.4.13"/>
<dbReference type="EMBL" id="AK004833">
    <property type="protein sequence ID" value="BAB23601.1"/>
    <property type="molecule type" value="mRNA"/>
</dbReference>
<dbReference type="EMBL" id="AK013179">
    <property type="protein sequence ID" value="BAB28694.1"/>
    <property type="molecule type" value="mRNA"/>
</dbReference>
<dbReference type="EMBL" id="AK076462">
    <property type="protein sequence ID" value="BAC36354.1"/>
    <property type="molecule type" value="mRNA"/>
</dbReference>
<dbReference type="EMBL" id="BC023840">
    <property type="protein sequence ID" value="AAH23840.1"/>
    <property type="molecule type" value="mRNA"/>
</dbReference>
<dbReference type="CCDS" id="CCDS15326.1">
    <molecule id="Q9DBN9-1"/>
</dbReference>
<dbReference type="RefSeq" id="NP_080776.1">
    <molecule id="Q9DBN9-1"/>
    <property type="nucleotide sequence ID" value="NM_026500.3"/>
</dbReference>
<dbReference type="SMR" id="Q9DBN9"/>
<dbReference type="FunCoup" id="Q9DBN9">
    <property type="interactions" value="1870"/>
</dbReference>
<dbReference type="STRING" id="10090.ENSMUSP00000027655"/>
<dbReference type="iPTMnet" id="Q9DBN9"/>
<dbReference type="PhosphoSitePlus" id="Q9DBN9"/>
<dbReference type="jPOST" id="Q9DBN9"/>
<dbReference type="PaxDb" id="10090-ENSMUSP00000027655"/>
<dbReference type="PeptideAtlas" id="Q9DBN9"/>
<dbReference type="ProteomicsDB" id="279856">
    <molecule id="Q9DBN9-1"/>
</dbReference>
<dbReference type="ProteomicsDB" id="279857">
    <molecule id="Q9DBN9-2"/>
</dbReference>
<dbReference type="Pumba" id="Q9DBN9"/>
<dbReference type="Antibodypedia" id="34489">
    <property type="antibodies" value="264 antibodies from 22 providers"/>
</dbReference>
<dbReference type="DNASU" id="67997"/>
<dbReference type="Ensembl" id="ENSMUST00000027655.8">
    <molecule id="Q9DBN9-1"/>
    <property type="protein sequence ID" value="ENSMUSP00000027655.7"/>
    <property type="gene ID" value="ENSMUSG00000026404.13"/>
</dbReference>
<dbReference type="GeneID" id="67997"/>
<dbReference type="KEGG" id="mmu:67997"/>
<dbReference type="UCSC" id="uc007cut.1">
    <molecule id="Q9DBN9-2"/>
    <property type="organism name" value="mouse"/>
</dbReference>
<dbReference type="UCSC" id="uc007cuu.2">
    <molecule id="Q9DBN9-1"/>
    <property type="organism name" value="mouse"/>
</dbReference>
<dbReference type="AGR" id="MGI:1915247"/>
<dbReference type="CTD" id="83479"/>
<dbReference type="MGI" id="MGI:1915247">
    <property type="gene designation" value="Ddx59"/>
</dbReference>
<dbReference type="VEuPathDB" id="HostDB:ENSMUSG00000026404"/>
<dbReference type="eggNOG" id="KOG0331">
    <property type="taxonomic scope" value="Eukaryota"/>
</dbReference>
<dbReference type="GeneTree" id="ENSGT00940000158639"/>
<dbReference type="HOGENOM" id="CLU_003041_1_5_1"/>
<dbReference type="InParanoid" id="Q9DBN9"/>
<dbReference type="OMA" id="DESFCIR"/>
<dbReference type="OrthoDB" id="360161at2759"/>
<dbReference type="PhylomeDB" id="Q9DBN9"/>
<dbReference type="TreeFam" id="TF330866"/>
<dbReference type="BioGRID-ORCS" id="67997">
    <property type="hits" value="25 hits in 84 CRISPR screens"/>
</dbReference>
<dbReference type="ChiTaRS" id="Ddx59">
    <property type="organism name" value="mouse"/>
</dbReference>
<dbReference type="PRO" id="PR:Q9DBN9"/>
<dbReference type="Proteomes" id="UP000000589">
    <property type="component" value="Chromosome 1"/>
</dbReference>
<dbReference type="RNAct" id="Q9DBN9">
    <property type="molecule type" value="protein"/>
</dbReference>
<dbReference type="Bgee" id="ENSMUSG00000026404">
    <property type="expression patterns" value="Expressed in saccule of membranous labyrinth and 252 other cell types or tissues"/>
</dbReference>
<dbReference type="GO" id="GO:0005737">
    <property type="term" value="C:cytoplasm"/>
    <property type="evidence" value="ECO:0007669"/>
    <property type="project" value="UniProtKB-SubCell"/>
</dbReference>
<dbReference type="GO" id="GO:0005634">
    <property type="term" value="C:nucleus"/>
    <property type="evidence" value="ECO:0007669"/>
    <property type="project" value="UniProtKB-SubCell"/>
</dbReference>
<dbReference type="GO" id="GO:0005524">
    <property type="term" value="F:ATP binding"/>
    <property type="evidence" value="ECO:0007669"/>
    <property type="project" value="UniProtKB-KW"/>
</dbReference>
<dbReference type="GO" id="GO:0016887">
    <property type="term" value="F:ATP hydrolysis activity"/>
    <property type="evidence" value="ECO:0007669"/>
    <property type="project" value="RHEA"/>
</dbReference>
<dbReference type="GO" id="GO:0003723">
    <property type="term" value="F:RNA binding"/>
    <property type="evidence" value="ECO:0007669"/>
    <property type="project" value="UniProtKB-KW"/>
</dbReference>
<dbReference type="GO" id="GO:0003724">
    <property type="term" value="F:RNA helicase activity"/>
    <property type="evidence" value="ECO:0007669"/>
    <property type="project" value="UniProtKB-EC"/>
</dbReference>
<dbReference type="GO" id="GO:0008270">
    <property type="term" value="F:zinc ion binding"/>
    <property type="evidence" value="ECO:0007669"/>
    <property type="project" value="UniProtKB-KW"/>
</dbReference>
<dbReference type="CDD" id="cd17962">
    <property type="entry name" value="DEADc_DDX59"/>
    <property type="match status" value="1"/>
</dbReference>
<dbReference type="CDD" id="cd18787">
    <property type="entry name" value="SF2_C_DEAD"/>
    <property type="match status" value="1"/>
</dbReference>
<dbReference type="CDD" id="cd23022">
    <property type="entry name" value="zf-HIT_DDX59"/>
    <property type="match status" value="1"/>
</dbReference>
<dbReference type="FunFam" id="3.40.50.300:FF:000079">
    <property type="entry name" value="probable ATP-dependent RNA helicase DDX17"/>
    <property type="match status" value="1"/>
</dbReference>
<dbReference type="FunFam" id="3.30.60.220:FF:000001">
    <property type="entry name" value="Probable ATP-dependent RNA helicase DDX59"/>
    <property type="match status" value="1"/>
</dbReference>
<dbReference type="FunFam" id="3.40.50.300:FF:001034">
    <property type="entry name" value="probable ATP-dependent RNA helicase DDX59"/>
    <property type="match status" value="1"/>
</dbReference>
<dbReference type="Gene3D" id="3.30.60.220">
    <property type="match status" value="1"/>
</dbReference>
<dbReference type="Gene3D" id="3.40.50.300">
    <property type="entry name" value="P-loop containing nucleotide triphosphate hydrolases"/>
    <property type="match status" value="2"/>
</dbReference>
<dbReference type="InterPro" id="IPR011545">
    <property type="entry name" value="DEAD/DEAH_box_helicase_dom"/>
</dbReference>
<dbReference type="InterPro" id="IPR050079">
    <property type="entry name" value="DEAD_box_RNA_helicase"/>
</dbReference>
<dbReference type="InterPro" id="IPR014001">
    <property type="entry name" value="Helicase_ATP-bd"/>
</dbReference>
<dbReference type="InterPro" id="IPR001650">
    <property type="entry name" value="Helicase_C-like"/>
</dbReference>
<dbReference type="InterPro" id="IPR027417">
    <property type="entry name" value="P-loop_NTPase"/>
</dbReference>
<dbReference type="InterPro" id="IPR014014">
    <property type="entry name" value="RNA_helicase_DEAD_Q_motif"/>
</dbReference>
<dbReference type="InterPro" id="IPR007529">
    <property type="entry name" value="Znf_HIT"/>
</dbReference>
<dbReference type="PANTHER" id="PTHR47959:SF1">
    <property type="entry name" value="ATP-DEPENDENT RNA HELICASE DBPA"/>
    <property type="match status" value="1"/>
</dbReference>
<dbReference type="PANTHER" id="PTHR47959">
    <property type="entry name" value="ATP-DEPENDENT RNA HELICASE RHLE-RELATED"/>
    <property type="match status" value="1"/>
</dbReference>
<dbReference type="Pfam" id="PF00270">
    <property type="entry name" value="DEAD"/>
    <property type="match status" value="1"/>
</dbReference>
<dbReference type="Pfam" id="PF00271">
    <property type="entry name" value="Helicase_C"/>
    <property type="match status" value="1"/>
</dbReference>
<dbReference type="Pfam" id="PF04438">
    <property type="entry name" value="zf-HIT"/>
    <property type="match status" value="1"/>
</dbReference>
<dbReference type="SMART" id="SM00487">
    <property type="entry name" value="DEXDc"/>
    <property type="match status" value="1"/>
</dbReference>
<dbReference type="SMART" id="SM00490">
    <property type="entry name" value="HELICc"/>
    <property type="match status" value="1"/>
</dbReference>
<dbReference type="SUPFAM" id="SSF52540">
    <property type="entry name" value="P-loop containing nucleoside triphosphate hydrolases"/>
    <property type="match status" value="2"/>
</dbReference>
<dbReference type="PROSITE" id="PS51192">
    <property type="entry name" value="HELICASE_ATP_BIND_1"/>
    <property type="match status" value="1"/>
</dbReference>
<dbReference type="PROSITE" id="PS51194">
    <property type="entry name" value="HELICASE_CTER"/>
    <property type="match status" value="1"/>
</dbReference>
<dbReference type="PROSITE" id="PS51195">
    <property type="entry name" value="Q_MOTIF"/>
    <property type="match status" value="1"/>
</dbReference>
<reference key="1">
    <citation type="journal article" date="2005" name="Science">
        <title>The transcriptional landscape of the mammalian genome.</title>
        <authorList>
            <person name="Carninci P."/>
            <person name="Kasukawa T."/>
            <person name="Katayama S."/>
            <person name="Gough J."/>
            <person name="Frith M.C."/>
            <person name="Maeda N."/>
            <person name="Oyama R."/>
            <person name="Ravasi T."/>
            <person name="Lenhard B."/>
            <person name="Wells C."/>
            <person name="Kodzius R."/>
            <person name="Shimokawa K."/>
            <person name="Bajic V.B."/>
            <person name="Brenner S.E."/>
            <person name="Batalov S."/>
            <person name="Forrest A.R."/>
            <person name="Zavolan M."/>
            <person name="Davis M.J."/>
            <person name="Wilming L.G."/>
            <person name="Aidinis V."/>
            <person name="Allen J.E."/>
            <person name="Ambesi-Impiombato A."/>
            <person name="Apweiler R."/>
            <person name="Aturaliya R.N."/>
            <person name="Bailey T.L."/>
            <person name="Bansal M."/>
            <person name="Baxter L."/>
            <person name="Beisel K.W."/>
            <person name="Bersano T."/>
            <person name="Bono H."/>
            <person name="Chalk A.M."/>
            <person name="Chiu K.P."/>
            <person name="Choudhary V."/>
            <person name="Christoffels A."/>
            <person name="Clutterbuck D.R."/>
            <person name="Crowe M.L."/>
            <person name="Dalla E."/>
            <person name="Dalrymple B.P."/>
            <person name="de Bono B."/>
            <person name="Della Gatta G."/>
            <person name="di Bernardo D."/>
            <person name="Down T."/>
            <person name="Engstrom P."/>
            <person name="Fagiolini M."/>
            <person name="Faulkner G."/>
            <person name="Fletcher C.F."/>
            <person name="Fukushima T."/>
            <person name="Furuno M."/>
            <person name="Futaki S."/>
            <person name="Gariboldi M."/>
            <person name="Georgii-Hemming P."/>
            <person name="Gingeras T.R."/>
            <person name="Gojobori T."/>
            <person name="Green R.E."/>
            <person name="Gustincich S."/>
            <person name="Harbers M."/>
            <person name="Hayashi Y."/>
            <person name="Hensch T.K."/>
            <person name="Hirokawa N."/>
            <person name="Hill D."/>
            <person name="Huminiecki L."/>
            <person name="Iacono M."/>
            <person name="Ikeo K."/>
            <person name="Iwama A."/>
            <person name="Ishikawa T."/>
            <person name="Jakt M."/>
            <person name="Kanapin A."/>
            <person name="Katoh M."/>
            <person name="Kawasawa Y."/>
            <person name="Kelso J."/>
            <person name="Kitamura H."/>
            <person name="Kitano H."/>
            <person name="Kollias G."/>
            <person name="Krishnan S.P."/>
            <person name="Kruger A."/>
            <person name="Kummerfeld S.K."/>
            <person name="Kurochkin I.V."/>
            <person name="Lareau L.F."/>
            <person name="Lazarevic D."/>
            <person name="Lipovich L."/>
            <person name="Liu J."/>
            <person name="Liuni S."/>
            <person name="McWilliam S."/>
            <person name="Madan Babu M."/>
            <person name="Madera M."/>
            <person name="Marchionni L."/>
            <person name="Matsuda H."/>
            <person name="Matsuzawa S."/>
            <person name="Miki H."/>
            <person name="Mignone F."/>
            <person name="Miyake S."/>
            <person name="Morris K."/>
            <person name="Mottagui-Tabar S."/>
            <person name="Mulder N."/>
            <person name="Nakano N."/>
            <person name="Nakauchi H."/>
            <person name="Ng P."/>
            <person name="Nilsson R."/>
            <person name="Nishiguchi S."/>
            <person name="Nishikawa S."/>
            <person name="Nori F."/>
            <person name="Ohara O."/>
            <person name="Okazaki Y."/>
            <person name="Orlando V."/>
            <person name="Pang K.C."/>
            <person name="Pavan W.J."/>
            <person name="Pavesi G."/>
            <person name="Pesole G."/>
            <person name="Petrovsky N."/>
            <person name="Piazza S."/>
            <person name="Reed J."/>
            <person name="Reid J.F."/>
            <person name="Ring B.Z."/>
            <person name="Ringwald M."/>
            <person name="Rost B."/>
            <person name="Ruan Y."/>
            <person name="Salzberg S.L."/>
            <person name="Sandelin A."/>
            <person name="Schneider C."/>
            <person name="Schoenbach C."/>
            <person name="Sekiguchi K."/>
            <person name="Semple C.A."/>
            <person name="Seno S."/>
            <person name="Sessa L."/>
            <person name="Sheng Y."/>
            <person name="Shibata Y."/>
            <person name="Shimada H."/>
            <person name="Shimada K."/>
            <person name="Silva D."/>
            <person name="Sinclair B."/>
            <person name="Sperling S."/>
            <person name="Stupka E."/>
            <person name="Sugiura K."/>
            <person name="Sultana R."/>
            <person name="Takenaka Y."/>
            <person name="Taki K."/>
            <person name="Tammoja K."/>
            <person name="Tan S.L."/>
            <person name="Tang S."/>
            <person name="Taylor M.S."/>
            <person name="Tegner J."/>
            <person name="Teichmann S.A."/>
            <person name="Ueda H.R."/>
            <person name="van Nimwegen E."/>
            <person name="Verardo R."/>
            <person name="Wei C.L."/>
            <person name="Yagi K."/>
            <person name="Yamanishi H."/>
            <person name="Zabarovsky E."/>
            <person name="Zhu S."/>
            <person name="Zimmer A."/>
            <person name="Hide W."/>
            <person name="Bult C."/>
            <person name="Grimmond S.M."/>
            <person name="Teasdale R.D."/>
            <person name="Liu E.T."/>
            <person name="Brusic V."/>
            <person name="Quackenbush J."/>
            <person name="Wahlestedt C."/>
            <person name="Mattick J.S."/>
            <person name="Hume D.A."/>
            <person name="Kai C."/>
            <person name="Sasaki D."/>
            <person name="Tomaru Y."/>
            <person name="Fukuda S."/>
            <person name="Kanamori-Katayama M."/>
            <person name="Suzuki M."/>
            <person name="Aoki J."/>
            <person name="Arakawa T."/>
            <person name="Iida J."/>
            <person name="Imamura K."/>
            <person name="Itoh M."/>
            <person name="Kato T."/>
            <person name="Kawaji H."/>
            <person name="Kawagashira N."/>
            <person name="Kawashima T."/>
            <person name="Kojima M."/>
            <person name="Kondo S."/>
            <person name="Konno H."/>
            <person name="Nakano K."/>
            <person name="Ninomiya N."/>
            <person name="Nishio T."/>
            <person name="Okada M."/>
            <person name="Plessy C."/>
            <person name="Shibata K."/>
            <person name="Shiraki T."/>
            <person name="Suzuki S."/>
            <person name="Tagami M."/>
            <person name="Waki K."/>
            <person name="Watahiki A."/>
            <person name="Okamura-Oho Y."/>
            <person name="Suzuki H."/>
            <person name="Kawai J."/>
            <person name="Hayashizaki Y."/>
        </authorList>
    </citation>
    <scope>NUCLEOTIDE SEQUENCE [LARGE SCALE MRNA] (ISOFORMS 1 AND 2)</scope>
    <source>
        <strain>C57BL/6J</strain>
        <tissue>Head</tissue>
        <tissue>Lung</tissue>
    </source>
</reference>
<reference key="2">
    <citation type="journal article" date="2004" name="Genome Res.">
        <title>The status, quality, and expansion of the NIH full-length cDNA project: the Mammalian Gene Collection (MGC).</title>
        <authorList>
            <consortium name="The MGC Project Team"/>
        </authorList>
    </citation>
    <scope>NUCLEOTIDE SEQUENCE [LARGE SCALE MRNA]</scope>
    <source>
        <strain>FVB/N</strain>
        <tissue>Mammary tumor</tissue>
    </source>
</reference>
<reference key="3">
    <citation type="journal article" date="2010" name="Cell">
        <title>A tissue-specific atlas of mouse protein phosphorylation and expression.</title>
        <authorList>
            <person name="Huttlin E.L."/>
            <person name="Jedrychowski M.P."/>
            <person name="Elias J.E."/>
            <person name="Goswami T."/>
            <person name="Rad R."/>
            <person name="Beausoleil S.A."/>
            <person name="Villen J."/>
            <person name="Haas W."/>
            <person name="Sowa M.E."/>
            <person name="Gygi S.P."/>
        </authorList>
    </citation>
    <scope>PHOSPHORYLATION [LARGE SCALE ANALYSIS] AT SER-160</scope>
    <scope>IDENTIFICATION BY MASS SPECTROMETRY [LARGE SCALE ANALYSIS]</scope>
    <source>
        <tissue>Kidney</tissue>
    </source>
</reference>
<reference key="4">
    <citation type="journal article" date="2013" name="Am. J. Hum. Genet.">
        <title>Mutations in DDX59 implicate RNA helicase in the pathogenesis of orofaciodigital syndrome.</title>
        <authorList>
            <person name="Shamseldin H.E."/>
            <person name="Rajab A."/>
            <person name="Alhashem A."/>
            <person name="Shaheen R."/>
            <person name="Al-Shidi T."/>
            <person name="Alamro R."/>
            <person name="Al Harassi S."/>
            <person name="Alkuraya F.S."/>
        </authorList>
    </citation>
    <scope>DEVELOPMENTAL STAGE</scope>
</reference>
<organism>
    <name type="scientific">Mus musculus</name>
    <name type="common">Mouse</name>
    <dbReference type="NCBI Taxonomy" id="10090"/>
    <lineage>
        <taxon>Eukaryota</taxon>
        <taxon>Metazoa</taxon>
        <taxon>Chordata</taxon>
        <taxon>Craniata</taxon>
        <taxon>Vertebrata</taxon>
        <taxon>Euteleostomi</taxon>
        <taxon>Mammalia</taxon>
        <taxon>Eutheria</taxon>
        <taxon>Euarchontoglires</taxon>
        <taxon>Glires</taxon>
        <taxon>Rodentia</taxon>
        <taxon>Myomorpha</taxon>
        <taxon>Muroidea</taxon>
        <taxon>Muridae</taxon>
        <taxon>Murinae</taxon>
        <taxon>Mus</taxon>
        <taxon>Mus</taxon>
    </lineage>
</organism>
<comment type="catalytic activity">
    <reaction>
        <text>ATP + H2O = ADP + phosphate + H(+)</text>
        <dbReference type="Rhea" id="RHEA:13065"/>
        <dbReference type="ChEBI" id="CHEBI:15377"/>
        <dbReference type="ChEBI" id="CHEBI:15378"/>
        <dbReference type="ChEBI" id="CHEBI:30616"/>
        <dbReference type="ChEBI" id="CHEBI:43474"/>
        <dbReference type="ChEBI" id="CHEBI:456216"/>
        <dbReference type="EC" id="3.6.4.13"/>
    </reaction>
</comment>
<comment type="subunit">
    <text evidence="1">Interacts (via HIT-type zinc finger) with the RUVBL1/RUVBL2 complex in the presence of ADP.</text>
</comment>
<comment type="subcellular location">
    <subcellularLocation>
        <location evidence="1">Cytoplasm</location>
    </subcellularLocation>
    <subcellularLocation>
        <location evidence="1">Nucleus</location>
    </subcellularLocation>
    <text evidence="1">Exhibits granular localization in the nucleus, as well as in the cytoplasm.</text>
</comment>
<comment type="alternative products">
    <event type="alternative splicing"/>
    <isoform>
        <id>Q9DBN9-1</id>
        <name>1</name>
        <sequence type="displayed"/>
    </isoform>
    <isoform>
        <id>Q9DBN9-2</id>
        <name>2</name>
        <sequence type="described" ref="VSP_026429 VSP_026430"/>
    </isoform>
</comment>
<comment type="developmental stage">
    <text evidence="5">AT 11.5 dpc, expressed in the developing snout region, eye and limb buds. At 13.5 dpc, highly enriched in the lips, palatal shelves (secondary palate), and developing limb buds.</text>
</comment>
<comment type="domain">
    <text>The Q motif is unique to and characteristic of the DEAD box family of RNA helicases and controls ATP binding and hydrolysis.</text>
</comment>
<comment type="similarity">
    <text evidence="7">Belongs to the DEAD box helicase family. DDX59 subfamily.</text>
</comment>
<protein>
    <recommendedName>
        <fullName>Probable ATP-dependent RNA helicase DDX59</fullName>
        <ecNumber>3.6.4.13</ecNumber>
    </recommendedName>
    <alternativeName>
        <fullName>DEAD box protein 59</fullName>
    </alternativeName>
    <alternativeName>
        <fullName evidence="1">Zinc finger HIT domain-containing protein 5</fullName>
    </alternativeName>
</protein>
<keyword id="KW-0025">Alternative splicing</keyword>
<keyword id="KW-0067">ATP-binding</keyword>
<keyword id="KW-0963">Cytoplasm</keyword>
<keyword id="KW-0347">Helicase</keyword>
<keyword id="KW-0378">Hydrolase</keyword>
<keyword id="KW-1017">Isopeptide bond</keyword>
<keyword id="KW-0479">Metal-binding</keyword>
<keyword id="KW-0547">Nucleotide-binding</keyword>
<keyword id="KW-0539">Nucleus</keyword>
<keyword id="KW-0597">Phosphoprotein</keyword>
<keyword id="KW-1185">Reference proteome</keyword>
<keyword id="KW-0694">RNA-binding</keyword>
<keyword id="KW-0832">Ubl conjugation</keyword>
<keyword id="KW-0862">Zinc</keyword>
<keyword id="KW-0863">Zinc-finger</keyword>
<name>DDX59_MOUSE</name>
<proteinExistence type="evidence at protein level"/>
<evidence type="ECO:0000250" key="1">
    <source>
        <dbReference type="UniProtKB" id="Q5T1V6"/>
    </source>
</evidence>
<evidence type="ECO:0000255" key="2">
    <source>
        <dbReference type="PROSITE-ProRule" id="PRU00541"/>
    </source>
</evidence>
<evidence type="ECO:0000255" key="3">
    <source>
        <dbReference type="PROSITE-ProRule" id="PRU00542"/>
    </source>
</evidence>
<evidence type="ECO:0000256" key="4">
    <source>
        <dbReference type="SAM" id="MobiDB-lite"/>
    </source>
</evidence>
<evidence type="ECO:0000269" key="5">
    <source>
    </source>
</evidence>
<evidence type="ECO:0000303" key="6">
    <source>
    </source>
</evidence>
<evidence type="ECO:0000305" key="7"/>
<evidence type="ECO:0007744" key="8">
    <source>
    </source>
</evidence>